<sequence length="341" mass="38170">MNTNSEQVLDQKSRPLRDLRISVTDRCNLRCTYCMPAEIFGQDYPFLPKGELLSFEELERLAKLFVHQFGVEKIRLTGGEPLMRKDMPELVGKLAGIKGIRDIAMTTNGVLLPVYADKLKKAGLKRVTVSLDSLDDERFKSINGRGVSVSKVLAGIEAAKKAGLGVKINMVVQKGVNEKDILPMARYFKEKGHILRFIEFMDVGNTNEWNRQSVVAKADIIRIINEDMPIEPIDPNYEGEVAKRYRYLDGSGEIGFISSVSDAFCTTCNRARLSAKGELFTCLFASSGFDLRTLIRSGQTDQELAEAIGTVWRNRDDQYSLDRALAKAVPRKKVEMSYIGG</sequence>
<dbReference type="EC" id="4.1.99.22" evidence="1"/>
<dbReference type="EMBL" id="CP000002">
    <property type="protein sequence ID" value="AAU25355.2"/>
    <property type="molecule type" value="Genomic_DNA"/>
</dbReference>
<dbReference type="EMBL" id="AE017333">
    <property type="protein sequence ID" value="AAU42729.1"/>
    <property type="molecule type" value="Genomic_DNA"/>
</dbReference>
<dbReference type="RefSeq" id="WP_003185982.1">
    <property type="nucleotide sequence ID" value="NC_006322.1"/>
</dbReference>
<dbReference type="SMR" id="Q65DY5"/>
<dbReference type="STRING" id="279010.BL04009"/>
<dbReference type="GeneID" id="92859512"/>
<dbReference type="KEGG" id="bld:BLi03915"/>
<dbReference type="KEGG" id="bli:BL04009"/>
<dbReference type="eggNOG" id="COG2896">
    <property type="taxonomic scope" value="Bacteria"/>
</dbReference>
<dbReference type="HOGENOM" id="CLU_009273_0_1_9"/>
<dbReference type="UniPathway" id="UPA00344"/>
<dbReference type="Proteomes" id="UP000000606">
    <property type="component" value="Chromosome"/>
</dbReference>
<dbReference type="GO" id="GO:0051539">
    <property type="term" value="F:4 iron, 4 sulfur cluster binding"/>
    <property type="evidence" value="ECO:0007669"/>
    <property type="project" value="UniProtKB-UniRule"/>
</dbReference>
<dbReference type="GO" id="GO:0061799">
    <property type="term" value="F:cyclic pyranopterin monophosphate synthase activity"/>
    <property type="evidence" value="ECO:0007669"/>
    <property type="project" value="TreeGrafter"/>
</dbReference>
<dbReference type="GO" id="GO:0061798">
    <property type="term" value="F:GTP 3',8'-cyclase activity"/>
    <property type="evidence" value="ECO:0007669"/>
    <property type="project" value="UniProtKB-UniRule"/>
</dbReference>
<dbReference type="GO" id="GO:0005525">
    <property type="term" value="F:GTP binding"/>
    <property type="evidence" value="ECO:0007669"/>
    <property type="project" value="UniProtKB-UniRule"/>
</dbReference>
<dbReference type="GO" id="GO:0046872">
    <property type="term" value="F:metal ion binding"/>
    <property type="evidence" value="ECO:0007669"/>
    <property type="project" value="UniProtKB-KW"/>
</dbReference>
<dbReference type="GO" id="GO:1904047">
    <property type="term" value="F:S-adenosyl-L-methionine binding"/>
    <property type="evidence" value="ECO:0007669"/>
    <property type="project" value="UniProtKB-UniRule"/>
</dbReference>
<dbReference type="GO" id="GO:0006777">
    <property type="term" value="P:Mo-molybdopterin cofactor biosynthetic process"/>
    <property type="evidence" value="ECO:0007669"/>
    <property type="project" value="UniProtKB-UniRule"/>
</dbReference>
<dbReference type="CDD" id="cd01335">
    <property type="entry name" value="Radical_SAM"/>
    <property type="match status" value="1"/>
</dbReference>
<dbReference type="CDD" id="cd21117">
    <property type="entry name" value="Twitch_MoaA"/>
    <property type="match status" value="1"/>
</dbReference>
<dbReference type="Gene3D" id="3.20.20.70">
    <property type="entry name" value="Aldolase class I"/>
    <property type="match status" value="1"/>
</dbReference>
<dbReference type="HAMAP" id="MF_01225_B">
    <property type="entry name" value="MoaA_B"/>
    <property type="match status" value="1"/>
</dbReference>
<dbReference type="InterPro" id="IPR013785">
    <property type="entry name" value="Aldolase_TIM"/>
</dbReference>
<dbReference type="InterPro" id="IPR006638">
    <property type="entry name" value="Elp3/MiaA/NifB-like_rSAM"/>
</dbReference>
<dbReference type="InterPro" id="IPR013483">
    <property type="entry name" value="MoaA"/>
</dbReference>
<dbReference type="InterPro" id="IPR000385">
    <property type="entry name" value="MoaA_NifB_PqqE_Fe-S-bd_CS"/>
</dbReference>
<dbReference type="InterPro" id="IPR010505">
    <property type="entry name" value="MoaA_twitch"/>
</dbReference>
<dbReference type="InterPro" id="IPR050105">
    <property type="entry name" value="MoCo_biosynth_MoaA/MoaC"/>
</dbReference>
<dbReference type="InterPro" id="IPR007197">
    <property type="entry name" value="rSAM"/>
</dbReference>
<dbReference type="NCBIfam" id="TIGR02666">
    <property type="entry name" value="moaA"/>
    <property type="match status" value="1"/>
</dbReference>
<dbReference type="NCBIfam" id="NF001199">
    <property type="entry name" value="PRK00164.2-1"/>
    <property type="match status" value="1"/>
</dbReference>
<dbReference type="PANTHER" id="PTHR22960:SF0">
    <property type="entry name" value="MOLYBDENUM COFACTOR BIOSYNTHESIS PROTEIN 1"/>
    <property type="match status" value="1"/>
</dbReference>
<dbReference type="PANTHER" id="PTHR22960">
    <property type="entry name" value="MOLYBDOPTERIN COFACTOR SYNTHESIS PROTEIN A"/>
    <property type="match status" value="1"/>
</dbReference>
<dbReference type="Pfam" id="PF06463">
    <property type="entry name" value="Mob_synth_C"/>
    <property type="match status" value="1"/>
</dbReference>
<dbReference type="Pfam" id="PF04055">
    <property type="entry name" value="Radical_SAM"/>
    <property type="match status" value="1"/>
</dbReference>
<dbReference type="SFLD" id="SFLDG01383">
    <property type="entry name" value="cyclic_pyranopterin_phosphate"/>
    <property type="match status" value="1"/>
</dbReference>
<dbReference type="SFLD" id="SFLDG01386">
    <property type="entry name" value="main_SPASM_domain-containing"/>
    <property type="match status" value="1"/>
</dbReference>
<dbReference type="SMART" id="SM00729">
    <property type="entry name" value="Elp3"/>
    <property type="match status" value="1"/>
</dbReference>
<dbReference type="SUPFAM" id="SSF102114">
    <property type="entry name" value="Radical SAM enzymes"/>
    <property type="match status" value="1"/>
</dbReference>
<dbReference type="PROSITE" id="PS01305">
    <property type="entry name" value="MOAA_NIFB_PQQE"/>
    <property type="match status" value="1"/>
</dbReference>
<dbReference type="PROSITE" id="PS51918">
    <property type="entry name" value="RADICAL_SAM"/>
    <property type="match status" value="1"/>
</dbReference>
<feature type="chain" id="PRO_1000054173" description="GTP 3',8-cyclase">
    <location>
        <begin position="1"/>
        <end position="341"/>
    </location>
</feature>
<feature type="domain" description="Radical SAM core" evidence="2">
    <location>
        <begin position="11"/>
        <end position="231"/>
    </location>
</feature>
<feature type="binding site" evidence="1">
    <location>
        <position position="20"/>
    </location>
    <ligand>
        <name>GTP</name>
        <dbReference type="ChEBI" id="CHEBI:37565"/>
    </ligand>
</feature>
<feature type="binding site" evidence="1">
    <location>
        <position position="27"/>
    </location>
    <ligand>
        <name>[4Fe-4S] cluster</name>
        <dbReference type="ChEBI" id="CHEBI:49883"/>
        <label>1</label>
        <note>4Fe-4S-S-AdoMet</note>
    </ligand>
</feature>
<feature type="binding site" evidence="1">
    <location>
        <position position="31"/>
    </location>
    <ligand>
        <name>[4Fe-4S] cluster</name>
        <dbReference type="ChEBI" id="CHEBI:49883"/>
        <label>1</label>
        <note>4Fe-4S-S-AdoMet</note>
    </ligand>
</feature>
<feature type="binding site" evidence="1">
    <location>
        <position position="33"/>
    </location>
    <ligand>
        <name>S-adenosyl-L-methionine</name>
        <dbReference type="ChEBI" id="CHEBI:59789"/>
    </ligand>
</feature>
<feature type="binding site" evidence="1">
    <location>
        <position position="34"/>
    </location>
    <ligand>
        <name>[4Fe-4S] cluster</name>
        <dbReference type="ChEBI" id="CHEBI:49883"/>
        <label>1</label>
        <note>4Fe-4S-S-AdoMet</note>
    </ligand>
</feature>
<feature type="binding site" evidence="1">
    <location>
        <position position="75"/>
    </location>
    <ligand>
        <name>GTP</name>
        <dbReference type="ChEBI" id="CHEBI:37565"/>
    </ligand>
</feature>
<feature type="binding site" evidence="1">
    <location>
        <position position="79"/>
    </location>
    <ligand>
        <name>S-adenosyl-L-methionine</name>
        <dbReference type="ChEBI" id="CHEBI:59789"/>
    </ligand>
</feature>
<feature type="binding site" evidence="1">
    <location>
        <position position="106"/>
    </location>
    <ligand>
        <name>GTP</name>
        <dbReference type="ChEBI" id="CHEBI:37565"/>
    </ligand>
</feature>
<feature type="binding site" evidence="1">
    <location>
        <position position="130"/>
    </location>
    <ligand>
        <name>S-adenosyl-L-methionine</name>
        <dbReference type="ChEBI" id="CHEBI:59789"/>
    </ligand>
</feature>
<feature type="binding site" evidence="1">
    <location>
        <position position="167"/>
    </location>
    <ligand>
        <name>GTP</name>
        <dbReference type="ChEBI" id="CHEBI:37565"/>
    </ligand>
</feature>
<feature type="binding site" evidence="1">
    <location>
        <position position="201"/>
    </location>
    <ligand>
        <name>S-adenosyl-L-methionine</name>
        <dbReference type="ChEBI" id="CHEBI:59789"/>
    </ligand>
</feature>
<feature type="binding site" evidence="1">
    <location>
        <position position="265"/>
    </location>
    <ligand>
        <name>[4Fe-4S] cluster</name>
        <dbReference type="ChEBI" id="CHEBI:49883"/>
        <label>2</label>
        <note>4Fe-4S-substrate</note>
    </ligand>
</feature>
<feature type="binding site" evidence="1">
    <location>
        <position position="268"/>
    </location>
    <ligand>
        <name>[4Fe-4S] cluster</name>
        <dbReference type="ChEBI" id="CHEBI:49883"/>
        <label>2</label>
        <note>4Fe-4S-substrate</note>
    </ligand>
</feature>
<feature type="binding site" evidence="1">
    <location>
        <begin position="270"/>
        <end position="272"/>
    </location>
    <ligand>
        <name>GTP</name>
        <dbReference type="ChEBI" id="CHEBI:37565"/>
    </ligand>
</feature>
<feature type="binding site" evidence="1">
    <location>
        <position position="282"/>
    </location>
    <ligand>
        <name>[4Fe-4S] cluster</name>
        <dbReference type="ChEBI" id="CHEBI:49883"/>
        <label>2</label>
        <note>4Fe-4S-substrate</note>
    </ligand>
</feature>
<name>MOAA_BACLD</name>
<gene>
    <name evidence="1" type="primary">moaA</name>
    <name type="ordered locus">BLi03915</name>
    <name type="ordered locus">BL04009</name>
</gene>
<reference key="1">
    <citation type="journal article" date="2004" name="J. Mol. Microbiol. Biotechnol.">
        <title>The complete genome sequence of Bacillus licheniformis DSM13, an organism with great industrial potential.</title>
        <authorList>
            <person name="Veith B."/>
            <person name="Herzberg C."/>
            <person name="Steckel S."/>
            <person name="Feesche J."/>
            <person name="Maurer K.H."/>
            <person name="Ehrenreich P."/>
            <person name="Baeumer S."/>
            <person name="Henne A."/>
            <person name="Liesegang H."/>
            <person name="Merkl R."/>
            <person name="Ehrenreich A."/>
            <person name="Gottschalk G."/>
        </authorList>
    </citation>
    <scope>NUCLEOTIDE SEQUENCE [LARGE SCALE GENOMIC DNA]</scope>
    <source>
        <strain>ATCC 14580 / DSM 13 / JCM 2505 / CCUG 7422 / NBRC 12200 / NCIMB 9375 / NCTC 10341 / NRRL NRS-1264 / Gibson 46</strain>
    </source>
</reference>
<reference key="2">
    <citation type="journal article" date="2004" name="Genome Biol.">
        <title>Complete genome sequence of the industrial bacterium Bacillus licheniformis and comparisons with closely related Bacillus species.</title>
        <authorList>
            <person name="Rey M.W."/>
            <person name="Ramaiya P."/>
            <person name="Nelson B.A."/>
            <person name="Brody-Karpin S.D."/>
            <person name="Zaretsky E.J."/>
            <person name="Tang M."/>
            <person name="Lopez de Leon A."/>
            <person name="Xiang H."/>
            <person name="Gusti V."/>
            <person name="Clausen I.G."/>
            <person name="Olsen P.B."/>
            <person name="Rasmussen M.D."/>
            <person name="Andersen J.T."/>
            <person name="Joergensen P.L."/>
            <person name="Larsen T.S."/>
            <person name="Sorokin A."/>
            <person name="Bolotin A."/>
            <person name="Lapidus A."/>
            <person name="Galleron N."/>
            <person name="Ehrlich S.D."/>
            <person name="Berka R.M."/>
        </authorList>
    </citation>
    <scope>NUCLEOTIDE SEQUENCE [LARGE SCALE GENOMIC DNA]</scope>
    <source>
        <strain>ATCC 14580 / DSM 13 / JCM 2505 / CCUG 7422 / NBRC 12200 / NCIMB 9375 / NCTC 10341 / NRRL NRS-1264 / Gibson 46</strain>
    </source>
</reference>
<evidence type="ECO:0000255" key="1">
    <source>
        <dbReference type="HAMAP-Rule" id="MF_01225"/>
    </source>
</evidence>
<evidence type="ECO:0000255" key="2">
    <source>
        <dbReference type="PROSITE-ProRule" id="PRU01266"/>
    </source>
</evidence>
<protein>
    <recommendedName>
        <fullName evidence="1">GTP 3',8-cyclase</fullName>
        <ecNumber evidence="1">4.1.99.22</ecNumber>
    </recommendedName>
    <alternativeName>
        <fullName evidence="1">Molybdenum cofactor biosynthesis protein A</fullName>
    </alternativeName>
</protein>
<keyword id="KW-0004">4Fe-4S</keyword>
<keyword id="KW-0342">GTP-binding</keyword>
<keyword id="KW-0408">Iron</keyword>
<keyword id="KW-0411">Iron-sulfur</keyword>
<keyword id="KW-0456">Lyase</keyword>
<keyword id="KW-0479">Metal-binding</keyword>
<keyword id="KW-0501">Molybdenum cofactor biosynthesis</keyword>
<keyword id="KW-0547">Nucleotide-binding</keyword>
<keyword id="KW-1185">Reference proteome</keyword>
<keyword id="KW-0949">S-adenosyl-L-methionine</keyword>
<accession>Q65DY5</accession>
<accession>Q62PF6</accession>
<comment type="function">
    <text evidence="1">Catalyzes the cyclization of GTP to (8S)-3',8-cyclo-7,8-dihydroguanosine 5'-triphosphate.</text>
</comment>
<comment type="catalytic activity">
    <reaction evidence="1">
        <text>GTP + AH2 + S-adenosyl-L-methionine = (8S)-3',8-cyclo-7,8-dihydroguanosine 5'-triphosphate + 5'-deoxyadenosine + L-methionine + A + H(+)</text>
        <dbReference type="Rhea" id="RHEA:49576"/>
        <dbReference type="ChEBI" id="CHEBI:13193"/>
        <dbReference type="ChEBI" id="CHEBI:15378"/>
        <dbReference type="ChEBI" id="CHEBI:17319"/>
        <dbReference type="ChEBI" id="CHEBI:17499"/>
        <dbReference type="ChEBI" id="CHEBI:37565"/>
        <dbReference type="ChEBI" id="CHEBI:57844"/>
        <dbReference type="ChEBI" id="CHEBI:59789"/>
        <dbReference type="ChEBI" id="CHEBI:131766"/>
        <dbReference type="EC" id="4.1.99.22"/>
    </reaction>
</comment>
<comment type="cofactor">
    <cofactor evidence="1">
        <name>[4Fe-4S] cluster</name>
        <dbReference type="ChEBI" id="CHEBI:49883"/>
    </cofactor>
    <text evidence="1">Binds 2 [4Fe-4S] clusters. Binds 1 [4Fe-4S] cluster coordinated with 3 cysteines and an exchangeable S-adenosyl-L-methionine and 1 [4Fe-4S] cluster coordinated with 3 cysteines and the GTP-derived substrate.</text>
</comment>
<comment type="pathway">
    <text evidence="1">Cofactor biosynthesis; molybdopterin biosynthesis.</text>
</comment>
<comment type="subunit">
    <text evidence="1">Monomer and homodimer.</text>
</comment>
<comment type="similarity">
    <text evidence="1">Belongs to the radical SAM superfamily. MoaA family.</text>
</comment>
<proteinExistence type="inferred from homology"/>
<organism>
    <name type="scientific">Bacillus licheniformis (strain ATCC 14580 / DSM 13 / JCM 2505 / CCUG 7422 / NBRC 12200 / NCIMB 9375 / NCTC 10341 / NRRL NRS-1264 / Gibson 46)</name>
    <dbReference type="NCBI Taxonomy" id="279010"/>
    <lineage>
        <taxon>Bacteria</taxon>
        <taxon>Bacillati</taxon>
        <taxon>Bacillota</taxon>
        <taxon>Bacilli</taxon>
        <taxon>Bacillales</taxon>
        <taxon>Bacillaceae</taxon>
        <taxon>Bacillus</taxon>
    </lineage>
</organism>